<name>PGK_PROM5</name>
<keyword id="KW-0067">ATP-binding</keyword>
<keyword id="KW-0963">Cytoplasm</keyword>
<keyword id="KW-0324">Glycolysis</keyword>
<keyword id="KW-0418">Kinase</keyword>
<keyword id="KW-0547">Nucleotide-binding</keyword>
<keyword id="KW-0808">Transferase</keyword>
<gene>
    <name evidence="1" type="primary">pgk</name>
    <name type="ordered locus">P9515_02241</name>
</gene>
<reference key="1">
    <citation type="journal article" date="2007" name="PLoS Genet.">
        <title>Patterns and implications of gene gain and loss in the evolution of Prochlorococcus.</title>
        <authorList>
            <person name="Kettler G.C."/>
            <person name="Martiny A.C."/>
            <person name="Huang K."/>
            <person name="Zucker J."/>
            <person name="Coleman M.L."/>
            <person name="Rodrigue S."/>
            <person name="Chen F."/>
            <person name="Lapidus A."/>
            <person name="Ferriera S."/>
            <person name="Johnson J."/>
            <person name="Steglich C."/>
            <person name="Church G.M."/>
            <person name="Richardson P."/>
            <person name="Chisholm S.W."/>
        </authorList>
    </citation>
    <scope>NUCLEOTIDE SEQUENCE [LARGE SCALE GENOMIC DNA]</scope>
    <source>
        <strain>MIT 9515</strain>
    </source>
</reference>
<dbReference type="EC" id="2.7.2.3" evidence="1"/>
<dbReference type="EMBL" id="CP000552">
    <property type="protein sequence ID" value="ABM71433.1"/>
    <property type="molecule type" value="Genomic_DNA"/>
</dbReference>
<dbReference type="RefSeq" id="WP_011819547.1">
    <property type="nucleotide sequence ID" value="NC_008817.1"/>
</dbReference>
<dbReference type="SMR" id="A2BUH2"/>
<dbReference type="STRING" id="167542.P9515_02241"/>
<dbReference type="GeneID" id="60202056"/>
<dbReference type="KEGG" id="pmc:P9515_02241"/>
<dbReference type="eggNOG" id="COG0126">
    <property type="taxonomic scope" value="Bacteria"/>
</dbReference>
<dbReference type="HOGENOM" id="CLU_025427_0_2_3"/>
<dbReference type="OrthoDB" id="9808460at2"/>
<dbReference type="UniPathway" id="UPA00109">
    <property type="reaction ID" value="UER00185"/>
</dbReference>
<dbReference type="Proteomes" id="UP000001589">
    <property type="component" value="Chromosome"/>
</dbReference>
<dbReference type="GO" id="GO:0005829">
    <property type="term" value="C:cytosol"/>
    <property type="evidence" value="ECO:0007669"/>
    <property type="project" value="TreeGrafter"/>
</dbReference>
<dbReference type="GO" id="GO:0043531">
    <property type="term" value="F:ADP binding"/>
    <property type="evidence" value="ECO:0007669"/>
    <property type="project" value="TreeGrafter"/>
</dbReference>
<dbReference type="GO" id="GO:0005524">
    <property type="term" value="F:ATP binding"/>
    <property type="evidence" value="ECO:0007669"/>
    <property type="project" value="UniProtKB-KW"/>
</dbReference>
<dbReference type="GO" id="GO:0004618">
    <property type="term" value="F:phosphoglycerate kinase activity"/>
    <property type="evidence" value="ECO:0007669"/>
    <property type="project" value="UniProtKB-UniRule"/>
</dbReference>
<dbReference type="GO" id="GO:0006094">
    <property type="term" value="P:gluconeogenesis"/>
    <property type="evidence" value="ECO:0007669"/>
    <property type="project" value="TreeGrafter"/>
</dbReference>
<dbReference type="GO" id="GO:0006096">
    <property type="term" value="P:glycolytic process"/>
    <property type="evidence" value="ECO:0007669"/>
    <property type="project" value="UniProtKB-UniRule"/>
</dbReference>
<dbReference type="CDD" id="cd00318">
    <property type="entry name" value="Phosphoglycerate_kinase"/>
    <property type="match status" value="1"/>
</dbReference>
<dbReference type="FunFam" id="3.40.50.1260:FF:000003">
    <property type="entry name" value="Phosphoglycerate kinase"/>
    <property type="match status" value="1"/>
</dbReference>
<dbReference type="FunFam" id="3.40.50.1260:FF:000006">
    <property type="entry name" value="Phosphoglycerate kinase"/>
    <property type="match status" value="1"/>
</dbReference>
<dbReference type="Gene3D" id="3.40.50.1260">
    <property type="entry name" value="Phosphoglycerate kinase, N-terminal domain"/>
    <property type="match status" value="2"/>
</dbReference>
<dbReference type="HAMAP" id="MF_00145">
    <property type="entry name" value="Phosphoglyc_kinase"/>
    <property type="match status" value="1"/>
</dbReference>
<dbReference type="InterPro" id="IPR001576">
    <property type="entry name" value="Phosphoglycerate_kinase"/>
</dbReference>
<dbReference type="InterPro" id="IPR015911">
    <property type="entry name" value="Phosphoglycerate_kinase_CS"/>
</dbReference>
<dbReference type="InterPro" id="IPR015824">
    <property type="entry name" value="Phosphoglycerate_kinase_N"/>
</dbReference>
<dbReference type="InterPro" id="IPR036043">
    <property type="entry name" value="Phosphoglycerate_kinase_sf"/>
</dbReference>
<dbReference type="PANTHER" id="PTHR11406">
    <property type="entry name" value="PHOSPHOGLYCERATE KINASE"/>
    <property type="match status" value="1"/>
</dbReference>
<dbReference type="PANTHER" id="PTHR11406:SF23">
    <property type="entry name" value="PHOSPHOGLYCERATE KINASE 1, CHLOROPLASTIC-RELATED"/>
    <property type="match status" value="1"/>
</dbReference>
<dbReference type="Pfam" id="PF00162">
    <property type="entry name" value="PGK"/>
    <property type="match status" value="1"/>
</dbReference>
<dbReference type="PIRSF" id="PIRSF000724">
    <property type="entry name" value="Pgk"/>
    <property type="match status" value="1"/>
</dbReference>
<dbReference type="PRINTS" id="PR00477">
    <property type="entry name" value="PHGLYCKINASE"/>
</dbReference>
<dbReference type="SUPFAM" id="SSF53748">
    <property type="entry name" value="Phosphoglycerate kinase"/>
    <property type="match status" value="1"/>
</dbReference>
<dbReference type="PROSITE" id="PS00111">
    <property type="entry name" value="PGLYCERATE_KINASE"/>
    <property type="match status" value="1"/>
</dbReference>
<protein>
    <recommendedName>
        <fullName evidence="1">Phosphoglycerate kinase</fullName>
        <ecNumber evidence="1">2.7.2.3</ecNumber>
    </recommendedName>
</protein>
<accession>A2BUH2</accession>
<feature type="chain" id="PRO_1000058029" description="Phosphoglycerate kinase">
    <location>
        <begin position="1"/>
        <end position="402"/>
    </location>
</feature>
<feature type="binding site" evidence="1">
    <location>
        <begin position="24"/>
        <end position="26"/>
    </location>
    <ligand>
        <name>substrate</name>
    </ligand>
</feature>
<feature type="binding site" evidence="1">
    <location>
        <position position="40"/>
    </location>
    <ligand>
        <name>substrate</name>
    </ligand>
</feature>
<feature type="binding site" evidence="1">
    <location>
        <begin position="63"/>
        <end position="66"/>
    </location>
    <ligand>
        <name>substrate</name>
    </ligand>
</feature>
<feature type="binding site" evidence="1">
    <location>
        <position position="122"/>
    </location>
    <ligand>
        <name>substrate</name>
    </ligand>
</feature>
<feature type="binding site" evidence="1">
    <location>
        <position position="155"/>
    </location>
    <ligand>
        <name>substrate</name>
    </ligand>
</feature>
<feature type="binding site" evidence="1">
    <location>
        <position position="206"/>
    </location>
    <ligand>
        <name>ATP</name>
        <dbReference type="ChEBI" id="CHEBI:30616"/>
    </ligand>
</feature>
<feature type="binding site" evidence="1">
    <location>
        <position position="297"/>
    </location>
    <ligand>
        <name>ATP</name>
        <dbReference type="ChEBI" id="CHEBI:30616"/>
    </ligand>
</feature>
<feature type="binding site" evidence="1">
    <location>
        <position position="328"/>
    </location>
    <ligand>
        <name>ATP</name>
        <dbReference type="ChEBI" id="CHEBI:30616"/>
    </ligand>
</feature>
<feature type="binding site" evidence="1">
    <location>
        <begin position="358"/>
        <end position="361"/>
    </location>
    <ligand>
        <name>ATP</name>
        <dbReference type="ChEBI" id="CHEBI:30616"/>
    </ligand>
</feature>
<evidence type="ECO:0000255" key="1">
    <source>
        <dbReference type="HAMAP-Rule" id="MF_00145"/>
    </source>
</evidence>
<organism>
    <name type="scientific">Prochlorococcus marinus (strain MIT 9515)</name>
    <dbReference type="NCBI Taxonomy" id="167542"/>
    <lineage>
        <taxon>Bacteria</taxon>
        <taxon>Bacillati</taxon>
        <taxon>Cyanobacteriota</taxon>
        <taxon>Cyanophyceae</taxon>
        <taxon>Synechococcales</taxon>
        <taxon>Prochlorococcaceae</taxon>
        <taxon>Prochlorococcus</taxon>
    </lineage>
</organism>
<proteinExistence type="inferred from homology"/>
<comment type="catalytic activity">
    <reaction evidence="1">
        <text>(2R)-3-phosphoglycerate + ATP = (2R)-3-phospho-glyceroyl phosphate + ADP</text>
        <dbReference type="Rhea" id="RHEA:14801"/>
        <dbReference type="ChEBI" id="CHEBI:30616"/>
        <dbReference type="ChEBI" id="CHEBI:57604"/>
        <dbReference type="ChEBI" id="CHEBI:58272"/>
        <dbReference type="ChEBI" id="CHEBI:456216"/>
        <dbReference type="EC" id="2.7.2.3"/>
    </reaction>
</comment>
<comment type="pathway">
    <text evidence="1">Carbohydrate degradation; glycolysis; pyruvate from D-glyceraldehyde 3-phosphate: step 2/5.</text>
</comment>
<comment type="subunit">
    <text evidence="1">Monomer.</text>
</comment>
<comment type="subcellular location">
    <subcellularLocation>
        <location evidence="1">Cytoplasm</location>
    </subcellularLocation>
</comment>
<comment type="similarity">
    <text evidence="1">Belongs to the phosphoglycerate kinase family.</text>
</comment>
<sequence length="402" mass="43137">MSKLSLSSLDKSKLEGKKVLVRVDFNVPLNDDGQITDDTRIRAAIPTIKYLINNSAKVILAAHFGRPKGKVNERMRLTPIAARLSEILGKKVNLTESCIGEEALEKSNNLNNGDVLLLENVRFYEEEEKNDLNFAKNLAAHADMYVNDAFGAAHRAHASTQGVTKFLEPSVAGFLLEKELKYLQGAIDAPNRPLAAIVGGSKVSSKIGVLDSLLDKCDKIIIGGGMIFTFYKARGLDVGKSLVEEDKLELARNLEEKAKTKGVELLLPSDVVLANEFSPTAESKVSQIDSISGDWMGLDIGPQSIKVFQNALAECKTIIWNGPMGVFEFDKFAEGTNSIATTLADLSSFSEVCTIIGGGDSVAAVEKAGLAEKMSHISTGGGASLELLEGKNLPGVAALNEN</sequence>